<dbReference type="EC" id="2.3.1.234" evidence="1"/>
<dbReference type="EC" id="2.7.11.1" evidence="1"/>
<dbReference type="EMBL" id="CP000745">
    <property type="protein sequence ID" value="ABR66477.1"/>
    <property type="molecule type" value="Genomic_DNA"/>
</dbReference>
<dbReference type="SMR" id="A6VJ51"/>
<dbReference type="STRING" id="426368.MmarC7_1414"/>
<dbReference type="KEGG" id="mmz:MmarC7_1414"/>
<dbReference type="eggNOG" id="arCOG01183">
    <property type="taxonomic scope" value="Archaea"/>
</dbReference>
<dbReference type="eggNOG" id="arCOG01185">
    <property type="taxonomic scope" value="Archaea"/>
</dbReference>
<dbReference type="HOGENOM" id="CLU_023208_2_2_2"/>
<dbReference type="OrthoDB" id="6818at2157"/>
<dbReference type="GO" id="GO:0005737">
    <property type="term" value="C:cytoplasm"/>
    <property type="evidence" value="ECO:0007669"/>
    <property type="project" value="UniProtKB-SubCell"/>
</dbReference>
<dbReference type="GO" id="GO:0000408">
    <property type="term" value="C:EKC/KEOPS complex"/>
    <property type="evidence" value="ECO:0007669"/>
    <property type="project" value="InterPro"/>
</dbReference>
<dbReference type="GO" id="GO:0005524">
    <property type="term" value="F:ATP binding"/>
    <property type="evidence" value="ECO:0007669"/>
    <property type="project" value="UniProtKB-UniRule"/>
</dbReference>
<dbReference type="GO" id="GO:0005506">
    <property type="term" value="F:iron ion binding"/>
    <property type="evidence" value="ECO:0007669"/>
    <property type="project" value="UniProtKB-UniRule"/>
</dbReference>
<dbReference type="GO" id="GO:0004222">
    <property type="term" value="F:metalloendopeptidase activity"/>
    <property type="evidence" value="ECO:0007669"/>
    <property type="project" value="InterPro"/>
</dbReference>
<dbReference type="GO" id="GO:0061711">
    <property type="term" value="F:N(6)-L-threonylcarbamoyladenine synthase activity"/>
    <property type="evidence" value="ECO:0007669"/>
    <property type="project" value="UniProtKB-EC"/>
</dbReference>
<dbReference type="GO" id="GO:0106310">
    <property type="term" value="F:protein serine kinase activity"/>
    <property type="evidence" value="ECO:0007669"/>
    <property type="project" value="RHEA"/>
</dbReference>
<dbReference type="GO" id="GO:0004674">
    <property type="term" value="F:protein serine/threonine kinase activity"/>
    <property type="evidence" value="ECO:0007669"/>
    <property type="project" value="UniProtKB-KW"/>
</dbReference>
<dbReference type="GO" id="GO:0004712">
    <property type="term" value="F:protein serine/threonine/tyrosine kinase activity"/>
    <property type="evidence" value="ECO:0007669"/>
    <property type="project" value="UniProtKB-UniRule"/>
</dbReference>
<dbReference type="GO" id="GO:0008270">
    <property type="term" value="F:zinc ion binding"/>
    <property type="evidence" value="ECO:0007669"/>
    <property type="project" value="InterPro"/>
</dbReference>
<dbReference type="GO" id="GO:0002949">
    <property type="term" value="P:tRNA threonylcarbamoyladenosine modification"/>
    <property type="evidence" value="ECO:0007669"/>
    <property type="project" value="UniProtKB-UniRule"/>
</dbReference>
<dbReference type="CDD" id="cd24131">
    <property type="entry name" value="ASKHA_NBD_Kae1_arch_bac"/>
    <property type="match status" value="1"/>
</dbReference>
<dbReference type="FunFam" id="3.30.420.40:FF:000038">
    <property type="entry name" value="Probable tRNA N6-adenosine threonylcarbamoyltransferase"/>
    <property type="match status" value="1"/>
</dbReference>
<dbReference type="FunFam" id="3.30.200.20:FF:000201">
    <property type="entry name" value="TP53-regulating kinase isoform X1"/>
    <property type="match status" value="1"/>
</dbReference>
<dbReference type="Gene3D" id="3.30.420.40">
    <property type="match status" value="2"/>
</dbReference>
<dbReference type="Gene3D" id="3.30.200.20">
    <property type="entry name" value="Phosphorylase Kinase, domain 1"/>
    <property type="match status" value="1"/>
</dbReference>
<dbReference type="Gene3D" id="1.10.510.10">
    <property type="entry name" value="Transferase(Phosphotransferase) domain 1"/>
    <property type="match status" value="1"/>
</dbReference>
<dbReference type="HAMAP" id="MF_01446">
    <property type="entry name" value="Kae1"/>
    <property type="match status" value="1"/>
</dbReference>
<dbReference type="HAMAP" id="MF_01447">
    <property type="entry name" value="Kae1_Bud32_arch"/>
    <property type="match status" value="1"/>
</dbReference>
<dbReference type="InterPro" id="IPR043129">
    <property type="entry name" value="ATPase_NBD"/>
</dbReference>
<dbReference type="InterPro" id="IPR022495">
    <property type="entry name" value="Bud32"/>
</dbReference>
<dbReference type="InterPro" id="IPR000905">
    <property type="entry name" value="Gcp-like_dom"/>
</dbReference>
<dbReference type="InterPro" id="IPR017861">
    <property type="entry name" value="KAE1/TsaD"/>
</dbReference>
<dbReference type="InterPro" id="IPR034680">
    <property type="entry name" value="Kae1_archaea_euk"/>
</dbReference>
<dbReference type="InterPro" id="IPR011009">
    <property type="entry name" value="Kinase-like_dom_sf"/>
</dbReference>
<dbReference type="InterPro" id="IPR018934">
    <property type="entry name" value="RIO_dom"/>
</dbReference>
<dbReference type="InterPro" id="IPR009220">
    <property type="entry name" value="tRNA_threonyl_synthase/kinase"/>
</dbReference>
<dbReference type="InterPro" id="IPR008266">
    <property type="entry name" value="Tyr_kinase_AS"/>
</dbReference>
<dbReference type="NCBIfam" id="TIGR03724">
    <property type="entry name" value="arch_bud32"/>
    <property type="match status" value="1"/>
</dbReference>
<dbReference type="NCBIfam" id="TIGR03722">
    <property type="entry name" value="arch_KAE1"/>
    <property type="match status" value="1"/>
</dbReference>
<dbReference type="NCBIfam" id="TIGR00329">
    <property type="entry name" value="gcp_kae1"/>
    <property type="match status" value="1"/>
</dbReference>
<dbReference type="NCBIfam" id="NF007174">
    <property type="entry name" value="PRK09605.1"/>
    <property type="match status" value="1"/>
</dbReference>
<dbReference type="PANTHER" id="PTHR11735">
    <property type="entry name" value="TRNA N6-ADENOSINE THREONYLCARBAMOYLTRANSFERASE"/>
    <property type="match status" value="1"/>
</dbReference>
<dbReference type="PANTHER" id="PTHR11735:SF14">
    <property type="entry name" value="TRNA N6-ADENOSINE THREONYLCARBAMOYLTRANSFERASE"/>
    <property type="match status" value="1"/>
</dbReference>
<dbReference type="Pfam" id="PF01163">
    <property type="entry name" value="RIO1"/>
    <property type="match status" value="1"/>
</dbReference>
<dbReference type="Pfam" id="PF00814">
    <property type="entry name" value="TsaD"/>
    <property type="match status" value="1"/>
</dbReference>
<dbReference type="PIRSF" id="PIRSF036401">
    <property type="entry name" value="Gcp_STYKS"/>
    <property type="match status" value="1"/>
</dbReference>
<dbReference type="PRINTS" id="PR00789">
    <property type="entry name" value="OSIALOPTASE"/>
</dbReference>
<dbReference type="SUPFAM" id="SSF53067">
    <property type="entry name" value="Actin-like ATPase domain"/>
    <property type="match status" value="1"/>
</dbReference>
<dbReference type="SUPFAM" id="SSF56112">
    <property type="entry name" value="Protein kinase-like (PK-like)"/>
    <property type="match status" value="1"/>
</dbReference>
<dbReference type="PROSITE" id="PS00109">
    <property type="entry name" value="PROTEIN_KINASE_TYR"/>
    <property type="match status" value="1"/>
</dbReference>
<name>KAE1B_METM7</name>
<reference key="1">
    <citation type="submission" date="2007-06" db="EMBL/GenBank/DDBJ databases">
        <title>Complete sequence of Methanococcus maripaludis C7.</title>
        <authorList>
            <consortium name="US DOE Joint Genome Institute"/>
            <person name="Copeland A."/>
            <person name="Lucas S."/>
            <person name="Lapidus A."/>
            <person name="Barry K."/>
            <person name="Glavina del Rio T."/>
            <person name="Dalin E."/>
            <person name="Tice H."/>
            <person name="Pitluck S."/>
            <person name="Clum A."/>
            <person name="Schmutz J."/>
            <person name="Larimer F."/>
            <person name="Land M."/>
            <person name="Hauser L."/>
            <person name="Kyrpides N."/>
            <person name="Anderson I."/>
            <person name="Sieprawska-Lupa M."/>
            <person name="Whitman W.B."/>
            <person name="Richardson P."/>
        </authorList>
    </citation>
    <scope>NUCLEOTIDE SEQUENCE [LARGE SCALE GENOMIC DNA]</scope>
    <source>
        <strain>C7 / ATCC BAA-1331</strain>
    </source>
</reference>
<comment type="function">
    <text evidence="1">Required for the formation of a threonylcarbamoyl group on adenosine at position 37 (t(6)A37) in tRNAs that read codons beginning with adenine. Is a component of the KEOPS complex that is probably involved in the transfer of the threonylcarbamoyl moiety of threonylcarbamoyl-AMP (TC-AMP) to the N6 group of A37. The Kae1 domain likely plays a direct catalytic role in this reaction. The Bud32 domain probably displays kinase activity that regulates Kae1 function.</text>
</comment>
<comment type="catalytic activity">
    <reaction evidence="1">
        <text>L-seryl-[protein] + ATP = O-phospho-L-seryl-[protein] + ADP + H(+)</text>
        <dbReference type="Rhea" id="RHEA:17989"/>
        <dbReference type="Rhea" id="RHEA-COMP:9863"/>
        <dbReference type="Rhea" id="RHEA-COMP:11604"/>
        <dbReference type="ChEBI" id="CHEBI:15378"/>
        <dbReference type="ChEBI" id="CHEBI:29999"/>
        <dbReference type="ChEBI" id="CHEBI:30616"/>
        <dbReference type="ChEBI" id="CHEBI:83421"/>
        <dbReference type="ChEBI" id="CHEBI:456216"/>
        <dbReference type="EC" id="2.7.11.1"/>
    </reaction>
</comment>
<comment type="catalytic activity">
    <reaction evidence="1">
        <text>L-threonyl-[protein] + ATP = O-phospho-L-threonyl-[protein] + ADP + H(+)</text>
        <dbReference type="Rhea" id="RHEA:46608"/>
        <dbReference type="Rhea" id="RHEA-COMP:11060"/>
        <dbReference type="Rhea" id="RHEA-COMP:11605"/>
        <dbReference type="ChEBI" id="CHEBI:15378"/>
        <dbReference type="ChEBI" id="CHEBI:30013"/>
        <dbReference type="ChEBI" id="CHEBI:30616"/>
        <dbReference type="ChEBI" id="CHEBI:61977"/>
        <dbReference type="ChEBI" id="CHEBI:456216"/>
        <dbReference type="EC" id="2.7.11.1"/>
    </reaction>
</comment>
<comment type="catalytic activity">
    <reaction evidence="1">
        <text>L-threonylcarbamoyladenylate + adenosine(37) in tRNA = N(6)-L-threonylcarbamoyladenosine(37) in tRNA + AMP + H(+)</text>
        <dbReference type="Rhea" id="RHEA:37059"/>
        <dbReference type="Rhea" id="RHEA-COMP:10162"/>
        <dbReference type="Rhea" id="RHEA-COMP:10163"/>
        <dbReference type="ChEBI" id="CHEBI:15378"/>
        <dbReference type="ChEBI" id="CHEBI:73682"/>
        <dbReference type="ChEBI" id="CHEBI:74411"/>
        <dbReference type="ChEBI" id="CHEBI:74418"/>
        <dbReference type="ChEBI" id="CHEBI:456215"/>
        <dbReference type="EC" id="2.3.1.234"/>
    </reaction>
</comment>
<comment type="cofactor">
    <cofactor evidence="1">
        <name>Fe(2+)</name>
        <dbReference type="ChEBI" id="CHEBI:29033"/>
    </cofactor>
    <text evidence="1">Binds 1 Fe(2+) ion per subunit.</text>
</comment>
<comment type="subunit">
    <text evidence="1">Component of the KEOPS complex that consists of Kae1, Bud32, Cgi121 and Pcc1; the whole complex dimerizes.</text>
</comment>
<comment type="subcellular location">
    <subcellularLocation>
        <location evidence="1">Cytoplasm</location>
    </subcellularLocation>
</comment>
<comment type="similarity">
    <text evidence="1">In the N-terminal section; belongs to the KAE1 / TsaD family.</text>
</comment>
<comment type="similarity">
    <text evidence="1">In the C-terminal section; belongs to the protein kinase superfamily. Tyr protein kinase family. BUD32 subfamily.</text>
</comment>
<proteinExistence type="inferred from homology"/>
<keyword id="KW-0012">Acyltransferase</keyword>
<keyword id="KW-0067">ATP-binding</keyword>
<keyword id="KW-0963">Cytoplasm</keyword>
<keyword id="KW-0408">Iron</keyword>
<keyword id="KW-0418">Kinase</keyword>
<keyword id="KW-0479">Metal-binding</keyword>
<keyword id="KW-0511">Multifunctional enzyme</keyword>
<keyword id="KW-0547">Nucleotide-binding</keyword>
<keyword id="KW-0723">Serine/threonine-protein kinase</keyword>
<keyword id="KW-0808">Transferase</keyword>
<keyword id="KW-0819">tRNA processing</keyword>
<protein>
    <recommendedName>
        <fullName evidence="1">Probable bifunctional tRNA threonylcarbamoyladenosine biosynthesis protein</fullName>
    </recommendedName>
    <domain>
        <recommendedName>
            <fullName evidence="1">tRNA N6-adenosine threonylcarbamoyltransferase</fullName>
            <ecNumber evidence="1">2.3.1.234</ecNumber>
        </recommendedName>
        <alternativeName>
            <fullName>N6-L-threonylcarbamoyladenine synthase</fullName>
            <shortName>t(6)A synthase</shortName>
        </alternativeName>
        <alternativeName>
            <fullName evidence="1">t(6)A37 threonylcarbamoyladenosine biosynthesis protein Kae1</fullName>
        </alternativeName>
        <alternativeName>
            <fullName evidence="1">tRNA threonylcarbamoyladenosine biosynthesis protein Kae1</fullName>
        </alternativeName>
    </domain>
    <domain>
        <recommendedName>
            <fullName evidence="1">Serine/threonine-protein kinase Bud32</fullName>
            <ecNumber evidence="1">2.7.11.1</ecNumber>
        </recommendedName>
    </domain>
</protein>
<organism>
    <name type="scientific">Methanococcus maripaludis (strain C7 / ATCC BAA-1331)</name>
    <dbReference type="NCBI Taxonomy" id="426368"/>
    <lineage>
        <taxon>Archaea</taxon>
        <taxon>Methanobacteriati</taxon>
        <taxon>Methanobacteriota</taxon>
        <taxon>Methanomada group</taxon>
        <taxon>Methanococci</taxon>
        <taxon>Methanococcales</taxon>
        <taxon>Methanococcaceae</taxon>
        <taxon>Methanococcus</taxon>
    </lineage>
</organism>
<accession>A6VJ51</accession>
<gene>
    <name type="ordered locus">MmarC7_1414</name>
</gene>
<evidence type="ECO:0000255" key="1">
    <source>
        <dbReference type="HAMAP-Rule" id="MF_01447"/>
    </source>
</evidence>
<sequence length="547" mass="61120">MDTSKDLICIGFEGTAEKTGVGIITSKGEVLFNKTIIYTPPVQGIHPREAADHHAETFVKLLKEALTVVPIEKIDLVSFSLGPGLGPSLRVTATTARALSLSINKPIIGVNHCISHVEIGKLKTDAVDPLTLYVSGGNTQVLAYTGKKYRVIGETLDIAIGNCLDQFARHCNMPHPGGVYVEKYAKDGNKFMKLPYTVKGMDISLSGLLTAAMKKYDSKERIEDVCYSLQETSFSMLTEITERALAHTNKAEVMLVGGVAANNRLKEMLDVMCSEQNVDFYVPEREFCGDNGAMIAWLGILQYLNGKRMDLADTKPISNYRSDMVEVNWIHEENNNSENGNIKSRIIPEHLIGKGAEADISKGRYLEFESITKERVKKGYRTSELDELIRMRRTVKEARFLAAIKELGIYAPSIFDIDKENKKIAMSYIHGKIAKEKIEEGSIDFCEDLGKIIGKMHVGGIVHNDLTTSNFIVSDNTFVIDFGLGKYSDLVEDKAIDLIVLKKSIMSIHYDKFDRVWNKIVEGYKTYNLAESVLECMKEVEKRARYL</sequence>
<feature type="chain" id="PRO_1000024465" description="Probable bifunctional tRNA threonylcarbamoyladenosine biosynthesis protein">
    <location>
        <begin position="1"/>
        <end position="547"/>
    </location>
</feature>
<feature type="domain" description="Protein kinase" evidence="1">
    <location>
        <begin position="346"/>
        <end position="547"/>
    </location>
</feature>
<feature type="region of interest" description="Kae1">
    <location>
        <begin position="1"/>
        <end position="329"/>
    </location>
</feature>
<feature type="active site" description="Proton acceptor; for kinase activity" evidence="1">
    <location>
        <position position="465"/>
    </location>
</feature>
<feature type="binding site" evidence="1">
    <location>
        <position position="112"/>
    </location>
    <ligand>
        <name>Fe cation</name>
        <dbReference type="ChEBI" id="CHEBI:24875"/>
    </ligand>
</feature>
<feature type="binding site" evidence="1">
    <location>
        <position position="116"/>
    </location>
    <ligand>
        <name>Fe cation</name>
        <dbReference type="ChEBI" id="CHEBI:24875"/>
    </ligand>
</feature>
<feature type="binding site" evidence="1">
    <location>
        <begin position="133"/>
        <end position="137"/>
    </location>
    <ligand>
        <name>L-threonylcarbamoyladenylate</name>
        <dbReference type="ChEBI" id="CHEBI:73682"/>
    </ligand>
</feature>
<feature type="binding site" evidence="1">
    <location>
        <position position="133"/>
    </location>
    <ligand>
        <name>Fe cation</name>
        <dbReference type="ChEBI" id="CHEBI:24875"/>
    </ligand>
</feature>
<feature type="binding site" evidence="1">
    <location>
        <position position="165"/>
    </location>
    <ligand>
        <name>L-threonylcarbamoyladenylate</name>
        <dbReference type="ChEBI" id="CHEBI:73682"/>
    </ligand>
</feature>
<feature type="binding site" evidence="1">
    <location>
        <position position="178"/>
    </location>
    <ligand>
        <name>L-threonylcarbamoyladenylate</name>
        <dbReference type="ChEBI" id="CHEBI:73682"/>
    </ligand>
</feature>
<feature type="binding site" evidence="1">
    <location>
        <position position="182"/>
    </location>
    <ligand>
        <name>L-threonylcarbamoyladenylate</name>
        <dbReference type="ChEBI" id="CHEBI:73682"/>
    </ligand>
</feature>
<feature type="binding site" evidence="1">
    <location>
        <position position="262"/>
    </location>
    <ligand>
        <name>L-threonylcarbamoyladenylate</name>
        <dbReference type="ChEBI" id="CHEBI:73682"/>
    </ligand>
</feature>
<feature type="binding site" evidence="1">
    <location>
        <position position="290"/>
    </location>
    <ligand>
        <name>Fe cation</name>
        <dbReference type="ChEBI" id="CHEBI:24875"/>
    </ligand>
</feature>
<feature type="binding site" evidence="1">
    <location>
        <begin position="352"/>
        <end position="360"/>
    </location>
    <ligand>
        <name>ATP</name>
        <dbReference type="ChEBI" id="CHEBI:30616"/>
    </ligand>
</feature>
<feature type="binding site" evidence="1">
    <location>
        <position position="373"/>
    </location>
    <ligand>
        <name>ATP</name>
        <dbReference type="ChEBI" id="CHEBI:30616"/>
    </ligand>
</feature>